<protein>
    <recommendedName>
        <fullName evidence="1">3-phosphoshikimate 1-carboxyvinyltransferase</fullName>
        <ecNumber evidence="1">2.5.1.19</ecNumber>
    </recommendedName>
    <alternativeName>
        <fullName evidence="1">5-enolpyruvylshikimate-3-phosphate synthase</fullName>
        <shortName evidence="1">EPSP synthase</shortName>
        <shortName evidence="1">EPSPS</shortName>
    </alternativeName>
</protein>
<keyword id="KW-0028">Amino-acid biosynthesis</keyword>
<keyword id="KW-0057">Aromatic amino acid biosynthesis</keyword>
<keyword id="KW-0963">Cytoplasm</keyword>
<keyword id="KW-0808">Transferase</keyword>
<comment type="function">
    <text evidence="1">Catalyzes the transfer of the enolpyruvyl moiety of phosphoenolpyruvate (PEP) to the 5-hydroxyl of shikimate-3-phosphate (S3P) to produce enolpyruvyl shikimate-3-phosphate and inorganic phosphate.</text>
</comment>
<comment type="catalytic activity">
    <reaction evidence="1">
        <text>3-phosphoshikimate + phosphoenolpyruvate = 5-O-(1-carboxyvinyl)-3-phosphoshikimate + phosphate</text>
        <dbReference type="Rhea" id="RHEA:21256"/>
        <dbReference type="ChEBI" id="CHEBI:43474"/>
        <dbReference type="ChEBI" id="CHEBI:57701"/>
        <dbReference type="ChEBI" id="CHEBI:58702"/>
        <dbReference type="ChEBI" id="CHEBI:145989"/>
        <dbReference type="EC" id="2.5.1.19"/>
    </reaction>
    <physiologicalReaction direction="left-to-right" evidence="1">
        <dbReference type="Rhea" id="RHEA:21257"/>
    </physiologicalReaction>
</comment>
<comment type="pathway">
    <text evidence="1">Metabolic intermediate biosynthesis; chorismate biosynthesis; chorismate from D-erythrose 4-phosphate and phosphoenolpyruvate: step 6/7.</text>
</comment>
<comment type="subunit">
    <text evidence="1">Monomer.</text>
</comment>
<comment type="subcellular location">
    <subcellularLocation>
        <location evidence="1">Cytoplasm</location>
    </subcellularLocation>
</comment>
<comment type="similarity">
    <text evidence="1">Belongs to the EPSP synthase family.</text>
</comment>
<reference key="1">
    <citation type="journal article" date="2009" name="PLoS Pathog.">
        <title>Genomic evidence for the evolution of Streptococcus equi: host restriction, increased virulence, and genetic exchange with human pathogens.</title>
        <authorList>
            <person name="Holden M.T.G."/>
            <person name="Heather Z."/>
            <person name="Paillot R."/>
            <person name="Steward K.F."/>
            <person name="Webb K."/>
            <person name="Ainslie F."/>
            <person name="Jourdan T."/>
            <person name="Bason N.C."/>
            <person name="Holroyd N.E."/>
            <person name="Mungall K."/>
            <person name="Quail M.A."/>
            <person name="Sanders M."/>
            <person name="Simmonds M."/>
            <person name="Willey D."/>
            <person name="Brooks K."/>
            <person name="Aanensen D.M."/>
            <person name="Spratt B.G."/>
            <person name="Jolley K.A."/>
            <person name="Maiden M.C.J."/>
            <person name="Kehoe M."/>
            <person name="Chanter N."/>
            <person name="Bentley S.D."/>
            <person name="Robinson C."/>
            <person name="Maskell D.J."/>
            <person name="Parkhill J."/>
            <person name="Waller A.S."/>
        </authorList>
    </citation>
    <scope>NUCLEOTIDE SEQUENCE [LARGE SCALE GENOMIC DNA]</scope>
    <source>
        <strain>H70</strain>
    </source>
</reference>
<organism>
    <name type="scientific">Streptococcus equi subsp. zooepidemicus (strain H70)</name>
    <dbReference type="NCBI Taxonomy" id="553483"/>
    <lineage>
        <taxon>Bacteria</taxon>
        <taxon>Bacillati</taxon>
        <taxon>Bacillota</taxon>
        <taxon>Bacilli</taxon>
        <taxon>Lactobacillales</taxon>
        <taxon>Streptococcaceae</taxon>
        <taxon>Streptococcus</taxon>
    </lineage>
</organism>
<dbReference type="EC" id="2.5.1.19" evidence="1"/>
<dbReference type="EMBL" id="FM204884">
    <property type="protein sequence ID" value="CAW99831.1"/>
    <property type="molecule type" value="Genomic_DNA"/>
</dbReference>
<dbReference type="SMR" id="C0MCK4"/>
<dbReference type="KEGG" id="seq:SZO_13020"/>
<dbReference type="eggNOG" id="COG0128">
    <property type="taxonomic scope" value="Bacteria"/>
</dbReference>
<dbReference type="HOGENOM" id="CLU_024321_0_1_9"/>
<dbReference type="UniPathway" id="UPA00053">
    <property type="reaction ID" value="UER00089"/>
</dbReference>
<dbReference type="Proteomes" id="UP000001368">
    <property type="component" value="Chromosome"/>
</dbReference>
<dbReference type="GO" id="GO:0005737">
    <property type="term" value="C:cytoplasm"/>
    <property type="evidence" value="ECO:0007669"/>
    <property type="project" value="UniProtKB-SubCell"/>
</dbReference>
<dbReference type="GO" id="GO:0003866">
    <property type="term" value="F:3-phosphoshikimate 1-carboxyvinyltransferase activity"/>
    <property type="evidence" value="ECO:0007669"/>
    <property type="project" value="UniProtKB-UniRule"/>
</dbReference>
<dbReference type="GO" id="GO:0008652">
    <property type="term" value="P:amino acid biosynthetic process"/>
    <property type="evidence" value="ECO:0007669"/>
    <property type="project" value="UniProtKB-KW"/>
</dbReference>
<dbReference type="GO" id="GO:0009073">
    <property type="term" value="P:aromatic amino acid family biosynthetic process"/>
    <property type="evidence" value="ECO:0007669"/>
    <property type="project" value="UniProtKB-KW"/>
</dbReference>
<dbReference type="GO" id="GO:0009423">
    <property type="term" value="P:chorismate biosynthetic process"/>
    <property type="evidence" value="ECO:0007669"/>
    <property type="project" value="UniProtKB-UniRule"/>
</dbReference>
<dbReference type="CDD" id="cd01556">
    <property type="entry name" value="EPSP_synthase"/>
    <property type="match status" value="1"/>
</dbReference>
<dbReference type="FunFam" id="3.65.10.10:FF:000005">
    <property type="entry name" value="3-phosphoshikimate 1-carboxyvinyltransferase"/>
    <property type="match status" value="1"/>
</dbReference>
<dbReference type="FunFam" id="3.65.10.10:FF:000006">
    <property type="entry name" value="3-phosphoshikimate 1-carboxyvinyltransferase"/>
    <property type="match status" value="1"/>
</dbReference>
<dbReference type="Gene3D" id="3.65.10.10">
    <property type="entry name" value="Enolpyruvate transferase domain"/>
    <property type="match status" value="2"/>
</dbReference>
<dbReference type="HAMAP" id="MF_00210">
    <property type="entry name" value="EPSP_synth"/>
    <property type="match status" value="1"/>
</dbReference>
<dbReference type="InterPro" id="IPR001986">
    <property type="entry name" value="Enolpyruvate_Tfrase_dom"/>
</dbReference>
<dbReference type="InterPro" id="IPR036968">
    <property type="entry name" value="Enolpyruvate_Tfrase_sf"/>
</dbReference>
<dbReference type="InterPro" id="IPR006264">
    <property type="entry name" value="EPSP_synthase"/>
</dbReference>
<dbReference type="InterPro" id="IPR023193">
    <property type="entry name" value="EPSP_synthase_CS"/>
</dbReference>
<dbReference type="InterPro" id="IPR013792">
    <property type="entry name" value="RNA3'P_cycl/enolpyr_Trfase_a/b"/>
</dbReference>
<dbReference type="NCBIfam" id="TIGR01356">
    <property type="entry name" value="aroA"/>
    <property type="match status" value="1"/>
</dbReference>
<dbReference type="PANTHER" id="PTHR21090">
    <property type="entry name" value="AROM/DEHYDROQUINATE SYNTHASE"/>
    <property type="match status" value="1"/>
</dbReference>
<dbReference type="PANTHER" id="PTHR21090:SF5">
    <property type="entry name" value="PENTAFUNCTIONAL AROM POLYPEPTIDE"/>
    <property type="match status" value="1"/>
</dbReference>
<dbReference type="Pfam" id="PF00275">
    <property type="entry name" value="EPSP_synthase"/>
    <property type="match status" value="1"/>
</dbReference>
<dbReference type="PIRSF" id="PIRSF000505">
    <property type="entry name" value="EPSPS"/>
    <property type="match status" value="1"/>
</dbReference>
<dbReference type="SUPFAM" id="SSF55205">
    <property type="entry name" value="EPT/RTPC-like"/>
    <property type="match status" value="1"/>
</dbReference>
<dbReference type="PROSITE" id="PS00104">
    <property type="entry name" value="EPSP_SYNTHASE_1"/>
    <property type="match status" value="1"/>
</dbReference>
<dbReference type="PROSITE" id="PS00885">
    <property type="entry name" value="EPSP_SYNTHASE_2"/>
    <property type="match status" value="1"/>
</dbReference>
<name>AROA_STRS7</name>
<proteinExistence type="inferred from homology"/>
<feature type="chain" id="PRO_1000204170" description="3-phosphoshikimate 1-carboxyvinyltransferase">
    <location>
        <begin position="1"/>
        <end position="427"/>
    </location>
</feature>
<feature type="active site" description="Proton acceptor" evidence="1">
    <location>
        <position position="312"/>
    </location>
</feature>
<feature type="binding site" evidence="1">
    <location>
        <position position="20"/>
    </location>
    <ligand>
        <name>3-phosphoshikimate</name>
        <dbReference type="ChEBI" id="CHEBI:145989"/>
    </ligand>
</feature>
<feature type="binding site" evidence="1">
    <location>
        <position position="20"/>
    </location>
    <ligand>
        <name>phosphoenolpyruvate</name>
        <dbReference type="ChEBI" id="CHEBI:58702"/>
    </ligand>
</feature>
<feature type="binding site" evidence="1">
    <location>
        <position position="21"/>
    </location>
    <ligand>
        <name>3-phosphoshikimate</name>
        <dbReference type="ChEBI" id="CHEBI:145989"/>
    </ligand>
</feature>
<feature type="binding site" evidence="1">
    <location>
        <position position="25"/>
    </location>
    <ligand>
        <name>3-phosphoshikimate</name>
        <dbReference type="ChEBI" id="CHEBI:145989"/>
    </ligand>
</feature>
<feature type="binding site" evidence="1">
    <location>
        <position position="92"/>
    </location>
    <ligand>
        <name>phosphoenolpyruvate</name>
        <dbReference type="ChEBI" id="CHEBI:58702"/>
    </ligand>
</feature>
<feature type="binding site" evidence="1">
    <location>
        <position position="120"/>
    </location>
    <ligand>
        <name>phosphoenolpyruvate</name>
        <dbReference type="ChEBI" id="CHEBI:58702"/>
    </ligand>
</feature>
<feature type="binding site" evidence="1">
    <location>
        <position position="166"/>
    </location>
    <ligand>
        <name>3-phosphoshikimate</name>
        <dbReference type="ChEBI" id="CHEBI:145989"/>
    </ligand>
</feature>
<feature type="binding site" evidence="1">
    <location>
        <position position="168"/>
    </location>
    <ligand>
        <name>3-phosphoshikimate</name>
        <dbReference type="ChEBI" id="CHEBI:145989"/>
    </ligand>
</feature>
<feature type="binding site" evidence="1">
    <location>
        <position position="168"/>
    </location>
    <ligand>
        <name>phosphoenolpyruvate</name>
        <dbReference type="ChEBI" id="CHEBI:58702"/>
    </ligand>
</feature>
<feature type="binding site" evidence="1">
    <location>
        <position position="312"/>
    </location>
    <ligand>
        <name>3-phosphoshikimate</name>
        <dbReference type="ChEBI" id="CHEBI:145989"/>
    </ligand>
</feature>
<feature type="binding site" evidence="1">
    <location>
        <position position="339"/>
    </location>
    <ligand>
        <name>3-phosphoshikimate</name>
        <dbReference type="ChEBI" id="CHEBI:145989"/>
    </ligand>
</feature>
<feature type="binding site" evidence="1">
    <location>
        <position position="343"/>
    </location>
    <ligand>
        <name>phosphoenolpyruvate</name>
        <dbReference type="ChEBI" id="CHEBI:58702"/>
    </ligand>
</feature>
<feature type="binding site" evidence="1">
    <location>
        <position position="385"/>
    </location>
    <ligand>
        <name>phosphoenolpyruvate</name>
        <dbReference type="ChEBI" id="CHEBI:58702"/>
    </ligand>
</feature>
<sequence>MKLRTKAKALRGRLRVPGDKSISHRAVIFGAIAEGQTVIHGLLRGQDVLATIQAFRDLGVTIYEAADSLIIEGRGFKGLKPAQKPLDMGNSGTSMRLLAGLLAAQDFSVQLLGDDSLSRRPMDRITIPLSLMGAELSGQGEKELPPLIVKGCQELRPIHYQLPVASAQVKSAILLAALQTQGETVILEKELTRNHTEEMIEQFGGKLSIAGKQISIKGPQRLQGQILQIPGDISSAAFWLAAGLIVPGSDLVLENVGINPTRTGLLEVIEKMGGQLSYQAVDKDIQSASLRVSYSSLKGVEISGDLIPRLIDELPVIALLATQAQGTTYIRNAQELRVKETDRIQAVTDVLGQMGADIQATEDGMVIRGKTPLHGAAVSTCGDHRIGMMTAIAALLVEEGQVTLERAEAILTSYPDFFKDLERLWHD</sequence>
<evidence type="ECO:0000255" key="1">
    <source>
        <dbReference type="HAMAP-Rule" id="MF_00210"/>
    </source>
</evidence>
<gene>
    <name evidence="1" type="primary">aroA</name>
    <name type="ordered locus">SZO_13020</name>
</gene>
<accession>C0MCK4</accession>